<dbReference type="EMBL" id="AM180355">
    <property type="protein sequence ID" value="CAJ70387.1"/>
    <property type="molecule type" value="Genomic_DNA"/>
</dbReference>
<dbReference type="RefSeq" id="WP_003421389.1">
    <property type="nucleotide sequence ID" value="NZ_JAUPES010000009.1"/>
</dbReference>
<dbReference type="RefSeq" id="YP_001090004.1">
    <property type="nucleotide sequence ID" value="NC_009089.1"/>
</dbReference>
<dbReference type="SMR" id="Q180Y2"/>
<dbReference type="STRING" id="272563.CD630_34840"/>
<dbReference type="EnsemblBacteria" id="CAJ70387">
    <property type="protein sequence ID" value="CAJ70387"/>
    <property type="gene ID" value="CD630_34840"/>
</dbReference>
<dbReference type="GeneID" id="66355945"/>
<dbReference type="KEGG" id="cdf:CD630_34840"/>
<dbReference type="KEGG" id="pdc:CDIF630_03795"/>
<dbReference type="PATRIC" id="fig|272563.120.peg.3682"/>
<dbReference type="eggNOG" id="COG0216">
    <property type="taxonomic scope" value="Bacteria"/>
</dbReference>
<dbReference type="OrthoDB" id="9806673at2"/>
<dbReference type="PhylomeDB" id="Q180Y2"/>
<dbReference type="BioCyc" id="PDIF272563:G12WB-3664-MONOMER"/>
<dbReference type="Proteomes" id="UP000001978">
    <property type="component" value="Chromosome"/>
</dbReference>
<dbReference type="GO" id="GO:0005737">
    <property type="term" value="C:cytoplasm"/>
    <property type="evidence" value="ECO:0007669"/>
    <property type="project" value="UniProtKB-SubCell"/>
</dbReference>
<dbReference type="GO" id="GO:0016149">
    <property type="term" value="F:translation release factor activity, codon specific"/>
    <property type="evidence" value="ECO:0007669"/>
    <property type="project" value="UniProtKB-UniRule"/>
</dbReference>
<dbReference type="FunFam" id="3.30.160.20:FF:000004">
    <property type="entry name" value="Peptide chain release factor 1"/>
    <property type="match status" value="1"/>
</dbReference>
<dbReference type="FunFam" id="3.30.70.1660:FF:000002">
    <property type="entry name" value="Peptide chain release factor 1"/>
    <property type="match status" value="1"/>
</dbReference>
<dbReference type="FunFam" id="3.30.70.1660:FF:000004">
    <property type="entry name" value="Peptide chain release factor 1"/>
    <property type="match status" value="1"/>
</dbReference>
<dbReference type="Gene3D" id="3.30.160.20">
    <property type="match status" value="1"/>
</dbReference>
<dbReference type="Gene3D" id="3.30.70.1660">
    <property type="match status" value="2"/>
</dbReference>
<dbReference type="Gene3D" id="6.10.140.1950">
    <property type="match status" value="1"/>
</dbReference>
<dbReference type="HAMAP" id="MF_00093">
    <property type="entry name" value="Rel_fac_1"/>
    <property type="match status" value="1"/>
</dbReference>
<dbReference type="InterPro" id="IPR005139">
    <property type="entry name" value="PCRF"/>
</dbReference>
<dbReference type="InterPro" id="IPR000352">
    <property type="entry name" value="Pep_chain_release_fac_I"/>
</dbReference>
<dbReference type="InterPro" id="IPR045853">
    <property type="entry name" value="Pep_chain_release_fac_I_sf"/>
</dbReference>
<dbReference type="InterPro" id="IPR050057">
    <property type="entry name" value="Prokaryotic/Mito_RF"/>
</dbReference>
<dbReference type="InterPro" id="IPR004373">
    <property type="entry name" value="RF-1"/>
</dbReference>
<dbReference type="NCBIfam" id="TIGR00019">
    <property type="entry name" value="prfA"/>
    <property type="match status" value="1"/>
</dbReference>
<dbReference type="NCBIfam" id="NF001859">
    <property type="entry name" value="PRK00591.1"/>
    <property type="match status" value="1"/>
</dbReference>
<dbReference type="PANTHER" id="PTHR43804">
    <property type="entry name" value="LD18447P"/>
    <property type="match status" value="1"/>
</dbReference>
<dbReference type="PANTHER" id="PTHR43804:SF7">
    <property type="entry name" value="LD18447P"/>
    <property type="match status" value="1"/>
</dbReference>
<dbReference type="Pfam" id="PF03462">
    <property type="entry name" value="PCRF"/>
    <property type="match status" value="1"/>
</dbReference>
<dbReference type="Pfam" id="PF00472">
    <property type="entry name" value="RF-1"/>
    <property type="match status" value="1"/>
</dbReference>
<dbReference type="SMART" id="SM00937">
    <property type="entry name" value="PCRF"/>
    <property type="match status" value="1"/>
</dbReference>
<dbReference type="SUPFAM" id="SSF75620">
    <property type="entry name" value="Release factor"/>
    <property type="match status" value="1"/>
</dbReference>
<dbReference type="PROSITE" id="PS00745">
    <property type="entry name" value="RF_PROK_I"/>
    <property type="match status" value="1"/>
</dbReference>
<evidence type="ECO:0000255" key="1">
    <source>
        <dbReference type="HAMAP-Rule" id="MF_00093"/>
    </source>
</evidence>
<feature type="chain" id="PRO_0000263255" description="Peptide chain release factor 1">
    <location>
        <begin position="1"/>
        <end position="354"/>
    </location>
</feature>
<feature type="modified residue" description="N5-methylglutamine" evidence="1">
    <location>
        <position position="233"/>
    </location>
</feature>
<organism>
    <name type="scientific">Clostridioides difficile (strain 630)</name>
    <name type="common">Peptoclostridium difficile</name>
    <dbReference type="NCBI Taxonomy" id="272563"/>
    <lineage>
        <taxon>Bacteria</taxon>
        <taxon>Bacillati</taxon>
        <taxon>Bacillota</taxon>
        <taxon>Clostridia</taxon>
        <taxon>Peptostreptococcales</taxon>
        <taxon>Peptostreptococcaceae</taxon>
        <taxon>Clostridioides</taxon>
    </lineage>
</organism>
<proteinExistence type="inferred from homology"/>
<reference key="1">
    <citation type="journal article" date="2006" name="Nat. Genet.">
        <title>The multidrug-resistant human pathogen Clostridium difficile has a highly mobile, mosaic genome.</title>
        <authorList>
            <person name="Sebaihia M."/>
            <person name="Wren B.W."/>
            <person name="Mullany P."/>
            <person name="Fairweather N.F."/>
            <person name="Minton N."/>
            <person name="Stabler R."/>
            <person name="Thomson N.R."/>
            <person name="Roberts A.P."/>
            <person name="Cerdeno-Tarraga A.M."/>
            <person name="Wang H."/>
            <person name="Holden M.T.G."/>
            <person name="Wright A."/>
            <person name="Churcher C."/>
            <person name="Quail M.A."/>
            <person name="Baker S."/>
            <person name="Bason N."/>
            <person name="Brooks K."/>
            <person name="Chillingworth T."/>
            <person name="Cronin A."/>
            <person name="Davis P."/>
            <person name="Dowd L."/>
            <person name="Fraser A."/>
            <person name="Feltwell T."/>
            <person name="Hance Z."/>
            <person name="Holroyd S."/>
            <person name="Jagels K."/>
            <person name="Moule S."/>
            <person name="Mungall K."/>
            <person name="Price C."/>
            <person name="Rabbinowitsch E."/>
            <person name="Sharp S."/>
            <person name="Simmonds M."/>
            <person name="Stevens K."/>
            <person name="Unwin L."/>
            <person name="Whithead S."/>
            <person name="Dupuy B."/>
            <person name="Dougan G."/>
            <person name="Barrell B."/>
            <person name="Parkhill J."/>
        </authorList>
    </citation>
    <scope>NUCLEOTIDE SEQUENCE [LARGE SCALE GENOMIC DNA]</scope>
    <source>
        <strain>630</strain>
    </source>
</reference>
<accession>Q180Y2</accession>
<keyword id="KW-0963">Cytoplasm</keyword>
<keyword id="KW-0488">Methylation</keyword>
<keyword id="KW-0648">Protein biosynthesis</keyword>
<keyword id="KW-1185">Reference proteome</keyword>
<sequence>MLKKLEVLEDTYKDLSEKIGDPDVINDQKVWQKYIKEHADLEPIVMKYREYKSVLDSIKESKEILQEESDEELRELAKMELAEMEEKVAPLEEEIKILLLPKDPNDDKNVIVEIRGGAGGDEAALFAGDLFRMYSRYAERRRWKIELLSASDTGVGGYKEVSFMIKGKGAYSRLKYESGVHRVQRIPSTESGGRIHTSTSTVAVLPEVEDVEVEINPNDLRIDVFRSSGNGGQSVNTTDSAVRVTHIPTGEVVSCQDGKSQLKNKEQALKILKARLYDKALAEQHKDIAAERKSQVGTGDRSERIRTYNFPQGRISDHRINLTLYKLDAFLDGDIDEMIDALITVDQTEKMTAI</sequence>
<comment type="function">
    <text evidence="1">Peptide chain release factor 1 directs the termination of translation in response to the peptide chain termination codons UAG and UAA.</text>
</comment>
<comment type="subcellular location">
    <subcellularLocation>
        <location evidence="1">Cytoplasm</location>
    </subcellularLocation>
</comment>
<comment type="PTM">
    <text evidence="1">Methylated by PrmC. Methylation increases the termination efficiency of RF1.</text>
</comment>
<comment type="similarity">
    <text evidence="1">Belongs to the prokaryotic/mitochondrial release factor family.</text>
</comment>
<protein>
    <recommendedName>
        <fullName evidence="1">Peptide chain release factor 1</fullName>
        <shortName evidence="1">RF-1</shortName>
    </recommendedName>
</protein>
<name>RF1_CLOD6</name>
<gene>
    <name evidence="1" type="primary">prfA</name>
    <name type="ordered locus">CD630_34840</name>
</gene>